<keyword id="KW-0143">Chaperone</keyword>
<keyword id="KW-0963">Cytoplasm</keyword>
<keyword id="KW-0653">Protein transport</keyword>
<keyword id="KW-0811">Translocation</keyword>
<keyword id="KW-0813">Transport</keyword>
<reference key="1">
    <citation type="journal article" date="2007" name="PLoS Genet.">
        <title>The complete genome sequence of Yersinia pseudotuberculosis IP31758, the causative agent of Far East scarlet-like fever.</title>
        <authorList>
            <person name="Eppinger M."/>
            <person name="Rosovitz M.J."/>
            <person name="Fricke W.F."/>
            <person name="Rasko D.A."/>
            <person name="Kokorina G."/>
            <person name="Fayolle C."/>
            <person name="Lindler L.E."/>
            <person name="Carniel E."/>
            <person name="Ravel J."/>
        </authorList>
    </citation>
    <scope>NUCLEOTIDE SEQUENCE [LARGE SCALE GENOMIC DNA]</scope>
    <source>
        <strain>IP 31758</strain>
    </source>
</reference>
<sequence length="158" mass="17576">MSEQNNTEMAFQIQRIYTKDISFEAPNAPQVFQQDWQPEVKLDLDTASSQLAEDVYEVVLRVTVTASLGEETAFLCEVQQGGIFSVAGIEGTQLAHCLGAYCPNILFPYARECITSLVSRGTFPQLNLAPVNFDALFMNYLQQQAEGEVEGVEQRQDA</sequence>
<accession>A7FCV1</accession>
<gene>
    <name evidence="1" type="primary">secB</name>
    <name type="ordered locus">YpsIP31758_0078</name>
</gene>
<protein>
    <recommendedName>
        <fullName evidence="1">Protein-export protein SecB</fullName>
    </recommendedName>
</protein>
<feature type="chain" id="PRO_1000062535" description="Protein-export protein SecB">
    <location>
        <begin position="1"/>
        <end position="158"/>
    </location>
</feature>
<dbReference type="EMBL" id="CP000720">
    <property type="protein sequence ID" value="ABS47122.1"/>
    <property type="molecule type" value="Genomic_DNA"/>
</dbReference>
<dbReference type="RefSeq" id="WP_002208976.1">
    <property type="nucleotide sequence ID" value="NC_009708.1"/>
</dbReference>
<dbReference type="SMR" id="A7FCV1"/>
<dbReference type="GeneID" id="96663547"/>
<dbReference type="KEGG" id="ypi:YpsIP31758_0078"/>
<dbReference type="HOGENOM" id="CLU_111574_1_0_6"/>
<dbReference type="Proteomes" id="UP000002412">
    <property type="component" value="Chromosome"/>
</dbReference>
<dbReference type="GO" id="GO:0005737">
    <property type="term" value="C:cytoplasm"/>
    <property type="evidence" value="ECO:0007669"/>
    <property type="project" value="UniProtKB-SubCell"/>
</dbReference>
<dbReference type="GO" id="GO:0051082">
    <property type="term" value="F:unfolded protein binding"/>
    <property type="evidence" value="ECO:0007669"/>
    <property type="project" value="InterPro"/>
</dbReference>
<dbReference type="GO" id="GO:0006457">
    <property type="term" value="P:protein folding"/>
    <property type="evidence" value="ECO:0007669"/>
    <property type="project" value="UniProtKB-UniRule"/>
</dbReference>
<dbReference type="GO" id="GO:0051262">
    <property type="term" value="P:protein tetramerization"/>
    <property type="evidence" value="ECO:0007669"/>
    <property type="project" value="InterPro"/>
</dbReference>
<dbReference type="GO" id="GO:0015031">
    <property type="term" value="P:protein transport"/>
    <property type="evidence" value="ECO:0007669"/>
    <property type="project" value="UniProtKB-UniRule"/>
</dbReference>
<dbReference type="CDD" id="cd00557">
    <property type="entry name" value="Translocase_SecB"/>
    <property type="match status" value="1"/>
</dbReference>
<dbReference type="FunFam" id="3.10.420.10:FF:000001">
    <property type="entry name" value="Protein-export chaperone SecB"/>
    <property type="match status" value="1"/>
</dbReference>
<dbReference type="Gene3D" id="3.10.420.10">
    <property type="entry name" value="SecB-like"/>
    <property type="match status" value="1"/>
</dbReference>
<dbReference type="HAMAP" id="MF_00821">
    <property type="entry name" value="SecB"/>
    <property type="match status" value="1"/>
</dbReference>
<dbReference type="InterPro" id="IPR003708">
    <property type="entry name" value="SecB"/>
</dbReference>
<dbReference type="InterPro" id="IPR035958">
    <property type="entry name" value="SecB-like_sf"/>
</dbReference>
<dbReference type="NCBIfam" id="NF004390">
    <property type="entry name" value="PRK05751.1-1"/>
    <property type="match status" value="1"/>
</dbReference>
<dbReference type="NCBIfam" id="NF004393">
    <property type="entry name" value="PRK05751.1-4"/>
    <property type="match status" value="1"/>
</dbReference>
<dbReference type="NCBIfam" id="TIGR00809">
    <property type="entry name" value="secB"/>
    <property type="match status" value="1"/>
</dbReference>
<dbReference type="PANTHER" id="PTHR36918">
    <property type="match status" value="1"/>
</dbReference>
<dbReference type="PANTHER" id="PTHR36918:SF1">
    <property type="entry name" value="PROTEIN-EXPORT PROTEIN SECB"/>
    <property type="match status" value="1"/>
</dbReference>
<dbReference type="Pfam" id="PF02556">
    <property type="entry name" value="SecB"/>
    <property type="match status" value="1"/>
</dbReference>
<dbReference type="PRINTS" id="PR01594">
    <property type="entry name" value="SECBCHAPRONE"/>
</dbReference>
<dbReference type="SUPFAM" id="SSF54611">
    <property type="entry name" value="SecB-like"/>
    <property type="match status" value="1"/>
</dbReference>
<name>SECB_YERP3</name>
<comment type="function">
    <text evidence="1">One of the proteins required for the normal export of preproteins out of the cell cytoplasm. It is a molecular chaperone that binds to a subset of precursor proteins, maintaining them in a translocation-competent state. It also specifically binds to its receptor SecA.</text>
</comment>
<comment type="subunit">
    <text evidence="1">Homotetramer, a dimer of dimers. One homotetramer interacts with 1 SecA dimer.</text>
</comment>
<comment type="subcellular location">
    <subcellularLocation>
        <location evidence="1">Cytoplasm</location>
    </subcellularLocation>
</comment>
<comment type="similarity">
    <text evidence="1">Belongs to the SecB family.</text>
</comment>
<organism>
    <name type="scientific">Yersinia pseudotuberculosis serotype O:1b (strain IP 31758)</name>
    <dbReference type="NCBI Taxonomy" id="349747"/>
    <lineage>
        <taxon>Bacteria</taxon>
        <taxon>Pseudomonadati</taxon>
        <taxon>Pseudomonadota</taxon>
        <taxon>Gammaproteobacteria</taxon>
        <taxon>Enterobacterales</taxon>
        <taxon>Yersiniaceae</taxon>
        <taxon>Yersinia</taxon>
    </lineage>
</organism>
<proteinExistence type="inferred from homology"/>
<evidence type="ECO:0000255" key="1">
    <source>
        <dbReference type="HAMAP-Rule" id="MF_00821"/>
    </source>
</evidence>